<organism>
    <name type="scientific">Pseudomonas aeruginosa (strain UCBPP-PA14)</name>
    <dbReference type="NCBI Taxonomy" id="208963"/>
    <lineage>
        <taxon>Bacteria</taxon>
        <taxon>Pseudomonadati</taxon>
        <taxon>Pseudomonadota</taxon>
        <taxon>Gammaproteobacteria</taxon>
        <taxon>Pseudomonadales</taxon>
        <taxon>Pseudomonadaceae</taxon>
        <taxon>Pseudomonas</taxon>
    </lineage>
</organism>
<accession>Q02TR5</accession>
<protein>
    <recommendedName>
        <fullName evidence="1">8-amino-7-oxononanoate synthase</fullName>
        <shortName evidence="1">AONS</shortName>
        <ecNumber evidence="1">2.3.1.47</ecNumber>
    </recommendedName>
    <alternativeName>
        <fullName evidence="1">7-keto-8-amino-pelargonic acid synthase</fullName>
        <shortName evidence="1">7-KAP synthase</shortName>
        <shortName evidence="1">KAPA synthase</shortName>
    </alternativeName>
    <alternativeName>
        <fullName evidence="1">8-amino-7-ketopelargonate synthase</fullName>
    </alternativeName>
</protein>
<gene>
    <name evidence="1" type="primary">bioF</name>
    <name type="ordered locus">PA14_06510</name>
</gene>
<sequence length="401" mass="42267">MSFDLASRLASRRAEDLYRQRPLLESAQGPDVVVDGQPLLAFCSNDYLGLANHPEVIAALRAGAERWGVGGGASHLVVGHSGPHHELELALAEFTGRPRALLFSTGYMANLGAVTALVGKGDTVLEDRLNHASLLDAGLLSGARFSRYLHNDPASLAARLDKAEGNTLVVTDGVFSMDGNLADLPALAAVAQARGAWLMVDDAHGFGPLGASGGGIVEHFGLGQEQVPVLIGTLGKGFGTAGAFVAGSEELIETLIQYARPYIYTTSQPPAVACATLKSLELLRRESWRRQHLAALIARFRHGAEALGLTLMDSFTPIQPILVGGSRQAVALAGMLRARGIMVGAIRPPTVPANSARLRVTLSAAHSEAQVDRLLEALGESWRQLSSSLLAEIEAEEGDDA</sequence>
<proteinExistence type="inferred from homology"/>
<name>BIOF_PSEAB</name>
<evidence type="ECO:0000255" key="1">
    <source>
        <dbReference type="HAMAP-Rule" id="MF_01693"/>
    </source>
</evidence>
<dbReference type="EC" id="2.3.1.47" evidence="1"/>
<dbReference type="EMBL" id="CP000438">
    <property type="protein sequence ID" value="ABJ15463.1"/>
    <property type="molecule type" value="Genomic_DNA"/>
</dbReference>
<dbReference type="RefSeq" id="WP_003084826.1">
    <property type="nucleotide sequence ID" value="NZ_CP034244.1"/>
</dbReference>
<dbReference type="SMR" id="Q02TR5"/>
<dbReference type="KEGG" id="pau:PA14_06510"/>
<dbReference type="PseudoCAP" id="PA14_06510"/>
<dbReference type="HOGENOM" id="CLU_015846_11_0_6"/>
<dbReference type="BioCyc" id="PAER208963:G1G74-539-MONOMER"/>
<dbReference type="UniPathway" id="UPA00078"/>
<dbReference type="Proteomes" id="UP000000653">
    <property type="component" value="Chromosome"/>
</dbReference>
<dbReference type="GO" id="GO:0008710">
    <property type="term" value="F:8-amino-7-oxononanoate synthase activity"/>
    <property type="evidence" value="ECO:0007669"/>
    <property type="project" value="UniProtKB-UniRule"/>
</dbReference>
<dbReference type="GO" id="GO:0030170">
    <property type="term" value="F:pyridoxal phosphate binding"/>
    <property type="evidence" value="ECO:0007669"/>
    <property type="project" value="UniProtKB-UniRule"/>
</dbReference>
<dbReference type="GO" id="GO:0009102">
    <property type="term" value="P:biotin biosynthetic process"/>
    <property type="evidence" value="ECO:0007669"/>
    <property type="project" value="UniProtKB-UniRule"/>
</dbReference>
<dbReference type="CDD" id="cd06454">
    <property type="entry name" value="KBL_like"/>
    <property type="match status" value="1"/>
</dbReference>
<dbReference type="Gene3D" id="3.90.1150.10">
    <property type="entry name" value="Aspartate Aminotransferase, domain 1"/>
    <property type="match status" value="1"/>
</dbReference>
<dbReference type="Gene3D" id="3.40.640.10">
    <property type="entry name" value="Type I PLP-dependent aspartate aminotransferase-like (Major domain)"/>
    <property type="match status" value="1"/>
</dbReference>
<dbReference type="HAMAP" id="MF_01693">
    <property type="entry name" value="BioF_aminotrans_2"/>
    <property type="match status" value="1"/>
</dbReference>
<dbReference type="InterPro" id="IPR001917">
    <property type="entry name" value="Aminotrans_II_pyridoxalP_BS"/>
</dbReference>
<dbReference type="InterPro" id="IPR004839">
    <property type="entry name" value="Aminotransferase_I/II_large"/>
</dbReference>
<dbReference type="InterPro" id="IPR050087">
    <property type="entry name" value="AON_synthase_class-II"/>
</dbReference>
<dbReference type="InterPro" id="IPR004723">
    <property type="entry name" value="AONS_Archaea/Proteobacteria"/>
</dbReference>
<dbReference type="InterPro" id="IPR022834">
    <property type="entry name" value="AONS_Proteobacteria"/>
</dbReference>
<dbReference type="InterPro" id="IPR015424">
    <property type="entry name" value="PyrdxlP-dep_Trfase"/>
</dbReference>
<dbReference type="InterPro" id="IPR015421">
    <property type="entry name" value="PyrdxlP-dep_Trfase_major"/>
</dbReference>
<dbReference type="InterPro" id="IPR015422">
    <property type="entry name" value="PyrdxlP-dep_Trfase_small"/>
</dbReference>
<dbReference type="NCBIfam" id="TIGR00858">
    <property type="entry name" value="bioF"/>
    <property type="match status" value="1"/>
</dbReference>
<dbReference type="PANTHER" id="PTHR13693:SF100">
    <property type="entry name" value="8-AMINO-7-OXONONANOATE SYNTHASE"/>
    <property type="match status" value="1"/>
</dbReference>
<dbReference type="PANTHER" id="PTHR13693">
    <property type="entry name" value="CLASS II AMINOTRANSFERASE/8-AMINO-7-OXONONANOATE SYNTHASE"/>
    <property type="match status" value="1"/>
</dbReference>
<dbReference type="Pfam" id="PF00155">
    <property type="entry name" value="Aminotran_1_2"/>
    <property type="match status" value="1"/>
</dbReference>
<dbReference type="SUPFAM" id="SSF53383">
    <property type="entry name" value="PLP-dependent transferases"/>
    <property type="match status" value="1"/>
</dbReference>
<dbReference type="PROSITE" id="PS00599">
    <property type="entry name" value="AA_TRANSFER_CLASS_2"/>
    <property type="match status" value="1"/>
</dbReference>
<keyword id="KW-0093">Biotin biosynthesis</keyword>
<keyword id="KW-0663">Pyridoxal phosphate</keyword>
<keyword id="KW-0808">Transferase</keyword>
<feature type="chain" id="PRO_0000381074" description="8-amino-7-oxononanoate synthase">
    <location>
        <begin position="1"/>
        <end position="401"/>
    </location>
</feature>
<feature type="binding site" evidence="1">
    <location>
        <position position="19"/>
    </location>
    <ligand>
        <name>substrate</name>
    </ligand>
</feature>
<feature type="binding site" evidence="1">
    <location>
        <begin position="106"/>
        <end position="107"/>
    </location>
    <ligand>
        <name>pyridoxal 5'-phosphate</name>
        <dbReference type="ChEBI" id="CHEBI:597326"/>
    </ligand>
</feature>
<feature type="binding site" evidence="1">
    <location>
        <position position="131"/>
    </location>
    <ligand>
        <name>substrate</name>
    </ligand>
</feature>
<feature type="binding site" evidence="1">
    <location>
        <position position="176"/>
    </location>
    <ligand>
        <name>pyridoxal 5'-phosphate</name>
        <dbReference type="ChEBI" id="CHEBI:597326"/>
    </ligand>
</feature>
<feature type="binding site" evidence="1">
    <location>
        <position position="204"/>
    </location>
    <ligand>
        <name>pyridoxal 5'-phosphate</name>
        <dbReference type="ChEBI" id="CHEBI:597326"/>
    </ligand>
</feature>
<feature type="binding site" evidence="1">
    <location>
        <position position="233"/>
    </location>
    <ligand>
        <name>pyridoxal 5'-phosphate</name>
        <dbReference type="ChEBI" id="CHEBI:597326"/>
    </ligand>
</feature>
<feature type="binding site" evidence="1">
    <location>
        <position position="350"/>
    </location>
    <ligand>
        <name>substrate</name>
    </ligand>
</feature>
<feature type="modified residue" description="N6-(pyridoxal phosphate)lysine" evidence="1">
    <location>
        <position position="236"/>
    </location>
</feature>
<comment type="function">
    <text evidence="1">Catalyzes the decarboxylative condensation of pimeloyl-[acyl-carrier protein] and L-alanine to produce 8-amino-7-oxononanoate (AON), [acyl-carrier protein], and carbon dioxide.</text>
</comment>
<comment type="catalytic activity">
    <reaction evidence="1">
        <text>6-carboxyhexanoyl-[ACP] + L-alanine + H(+) = (8S)-8-amino-7-oxononanoate + holo-[ACP] + CO2</text>
        <dbReference type="Rhea" id="RHEA:42288"/>
        <dbReference type="Rhea" id="RHEA-COMP:9685"/>
        <dbReference type="Rhea" id="RHEA-COMP:9955"/>
        <dbReference type="ChEBI" id="CHEBI:15378"/>
        <dbReference type="ChEBI" id="CHEBI:16526"/>
        <dbReference type="ChEBI" id="CHEBI:57972"/>
        <dbReference type="ChEBI" id="CHEBI:64479"/>
        <dbReference type="ChEBI" id="CHEBI:78846"/>
        <dbReference type="ChEBI" id="CHEBI:149468"/>
        <dbReference type="EC" id="2.3.1.47"/>
    </reaction>
</comment>
<comment type="cofactor">
    <cofactor evidence="1">
        <name>pyridoxal 5'-phosphate</name>
        <dbReference type="ChEBI" id="CHEBI:597326"/>
    </cofactor>
</comment>
<comment type="pathway">
    <text evidence="1">Cofactor biosynthesis; biotin biosynthesis.</text>
</comment>
<comment type="subunit">
    <text evidence="1">Homodimer.</text>
</comment>
<comment type="similarity">
    <text evidence="1">Belongs to the class-II pyridoxal-phosphate-dependent aminotransferase family. BioF subfamily.</text>
</comment>
<reference key="1">
    <citation type="journal article" date="2006" name="Genome Biol.">
        <title>Genomic analysis reveals that Pseudomonas aeruginosa virulence is combinatorial.</title>
        <authorList>
            <person name="Lee D.G."/>
            <person name="Urbach J.M."/>
            <person name="Wu G."/>
            <person name="Liberati N.T."/>
            <person name="Feinbaum R.L."/>
            <person name="Miyata S."/>
            <person name="Diggins L.T."/>
            <person name="He J."/>
            <person name="Saucier M."/>
            <person name="Deziel E."/>
            <person name="Friedman L."/>
            <person name="Li L."/>
            <person name="Grills G."/>
            <person name="Montgomery K."/>
            <person name="Kucherlapati R."/>
            <person name="Rahme L.G."/>
            <person name="Ausubel F.M."/>
        </authorList>
    </citation>
    <scope>NUCLEOTIDE SEQUENCE [LARGE SCALE GENOMIC DNA]</scope>
    <source>
        <strain>UCBPP-PA14</strain>
    </source>
</reference>